<feature type="chain" id="PRO_1000046031" description="Ribosomal protein L11 methyltransferase">
    <location>
        <begin position="1"/>
        <end position="292"/>
    </location>
</feature>
<feature type="binding site" evidence="1">
    <location>
        <position position="143"/>
    </location>
    <ligand>
        <name>S-adenosyl-L-methionine</name>
        <dbReference type="ChEBI" id="CHEBI:59789"/>
    </ligand>
</feature>
<feature type="binding site" evidence="1">
    <location>
        <position position="164"/>
    </location>
    <ligand>
        <name>S-adenosyl-L-methionine</name>
        <dbReference type="ChEBI" id="CHEBI:59789"/>
    </ligand>
</feature>
<feature type="binding site" evidence="1">
    <location>
        <position position="186"/>
    </location>
    <ligand>
        <name>S-adenosyl-L-methionine</name>
        <dbReference type="ChEBI" id="CHEBI:59789"/>
    </ligand>
</feature>
<feature type="binding site" evidence="1">
    <location>
        <position position="227"/>
    </location>
    <ligand>
        <name>S-adenosyl-L-methionine</name>
        <dbReference type="ChEBI" id="CHEBI:59789"/>
    </ligand>
</feature>
<comment type="function">
    <text evidence="1">Methylates ribosomal protein L11.</text>
</comment>
<comment type="catalytic activity">
    <reaction evidence="1">
        <text>L-lysyl-[protein] + 3 S-adenosyl-L-methionine = N(6),N(6),N(6)-trimethyl-L-lysyl-[protein] + 3 S-adenosyl-L-homocysteine + 3 H(+)</text>
        <dbReference type="Rhea" id="RHEA:54192"/>
        <dbReference type="Rhea" id="RHEA-COMP:9752"/>
        <dbReference type="Rhea" id="RHEA-COMP:13826"/>
        <dbReference type="ChEBI" id="CHEBI:15378"/>
        <dbReference type="ChEBI" id="CHEBI:29969"/>
        <dbReference type="ChEBI" id="CHEBI:57856"/>
        <dbReference type="ChEBI" id="CHEBI:59789"/>
        <dbReference type="ChEBI" id="CHEBI:61961"/>
    </reaction>
</comment>
<comment type="subcellular location">
    <subcellularLocation>
        <location evidence="1">Cytoplasm</location>
    </subcellularLocation>
</comment>
<comment type="similarity">
    <text evidence="1">Belongs to the methyltransferase superfamily. PrmA family.</text>
</comment>
<protein>
    <recommendedName>
        <fullName evidence="1">Ribosomal protein L11 methyltransferase</fullName>
        <shortName evidence="1">L11 Mtase</shortName>
        <ecNumber evidence="1">2.1.1.-</ecNumber>
    </recommendedName>
</protein>
<sequence length="292" mass="31941">MSWLQVKVLTDEAGAAALEQIFEGLGALSVTMLDAADDPVLEPDLGTTPLWRNTQVVALFSADTSAEMVREQLERNQIAAADIECEVIEDRDWEREWMTHFHPMRFGSRLWICPSWGEPEDPNGVNLLLDPGLAFGTGTHPTTALCLTWLDSQQLQGKQVIDFGCGSGVLAIAALLLGADHATGTDIDPQALEASRDNAERNSVSEGLTLHFPEQMPEMQAEVVIANILANPLISLAPKLATLTLPGGSIALSGILKDQEEAVAEAYRNYFELDPTEYKEDWVLISGRRLPY</sequence>
<evidence type="ECO:0000255" key="1">
    <source>
        <dbReference type="HAMAP-Rule" id="MF_00735"/>
    </source>
</evidence>
<organism>
    <name type="scientific">Hahella chejuensis (strain KCTC 2396)</name>
    <dbReference type="NCBI Taxonomy" id="349521"/>
    <lineage>
        <taxon>Bacteria</taxon>
        <taxon>Pseudomonadati</taxon>
        <taxon>Pseudomonadota</taxon>
        <taxon>Gammaproteobacteria</taxon>
        <taxon>Oceanospirillales</taxon>
        <taxon>Hahellaceae</taxon>
        <taxon>Hahella</taxon>
    </lineage>
</organism>
<gene>
    <name evidence="1" type="primary">prmA</name>
    <name type="ordered locus">HCH_06007</name>
</gene>
<reference key="1">
    <citation type="journal article" date="2005" name="Nucleic Acids Res.">
        <title>Genomic blueprint of Hahella chejuensis, a marine microbe producing an algicidal agent.</title>
        <authorList>
            <person name="Jeong H."/>
            <person name="Yim J.H."/>
            <person name="Lee C."/>
            <person name="Choi S.-H."/>
            <person name="Park Y.K."/>
            <person name="Yoon S.H."/>
            <person name="Hur C.-G."/>
            <person name="Kang H.-Y."/>
            <person name="Kim D."/>
            <person name="Lee H.H."/>
            <person name="Park K.H."/>
            <person name="Park S.-H."/>
            <person name="Park H.-S."/>
            <person name="Lee H.K."/>
            <person name="Oh T.K."/>
            <person name="Kim J.F."/>
        </authorList>
    </citation>
    <scope>NUCLEOTIDE SEQUENCE [LARGE SCALE GENOMIC DNA]</scope>
    <source>
        <strain>KCTC 2396</strain>
    </source>
</reference>
<dbReference type="EC" id="2.1.1.-" evidence="1"/>
<dbReference type="EMBL" id="CP000155">
    <property type="protein sequence ID" value="ABC32657.1"/>
    <property type="molecule type" value="Genomic_DNA"/>
</dbReference>
<dbReference type="RefSeq" id="WP_011399715.1">
    <property type="nucleotide sequence ID" value="NC_007645.1"/>
</dbReference>
<dbReference type="SMR" id="Q2S9L7"/>
<dbReference type="STRING" id="349521.HCH_06007"/>
<dbReference type="KEGG" id="hch:HCH_06007"/>
<dbReference type="eggNOG" id="COG2264">
    <property type="taxonomic scope" value="Bacteria"/>
</dbReference>
<dbReference type="HOGENOM" id="CLU_049382_4_1_6"/>
<dbReference type="OrthoDB" id="9785995at2"/>
<dbReference type="Proteomes" id="UP000000238">
    <property type="component" value="Chromosome"/>
</dbReference>
<dbReference type="GO" id="GO:0005829">
    <property type="term" value="C:cytosol"/>
    <property type="evidence" value="ECO:0007669"/>
    <property type="project" value="TreeGrafter"/>
</dbReference>
<dbReference type="GO" id="GO:0016279">
    <property type="term" value="F:protein-lysine N-methyltransferase activity"/>
    <property type="evidence" value="ECO:0007669"/>
    <property type="project" value="TreeGrafter"/>
</dbReference>
<dbReference type="GO" id="GO:0032259">
    <property type="term" value="P:methylation"/>
    <property type="evidence" value="ECO:0007669"/>
    <property type="project" value="UniProtKB-KW"/>
</dbReference>
<dbReference type="CDD" id="cd02440">
    <property type="entry name" value="AdoMet_MTases"/>
    <property type="match status" value="1"/>
</dbReference>
<dbReference type="Gene3D" id="3.40.50.150">
    <property type="entry name" value="Vaccinia Virus protein VP39"/>
    <property type="match status" value="1"/>
</dbReference>
<dbReference type="HAMAP" id="MF_00735">
    <property type="entry name" value="Methyltr_PrmA"/>
    <property type="match status" value="1"/>
</dbReference>
<dbReference type="InterPro" id="IPR050078">
    <property type="entry name" value="Ribosomal_L11_MeTrfase_PrmA"/>
</dbReference>
<dbReference type="InterPro" id="IPR004498">
    <property type="entry name" value="Ribosomal_PrmA_MeTrfase"/>
</dbReference>
<dbReference type="InterPro" id="IPR029063">
    <property type="entry name" value="SAM-dependent_MTases_sf"/>
</dbReference>
<dbReference type="NCBIfam" id="TIGR00406">
    <property type="entry name" value="prmA"/>
    <property type="match status" value="1"/>
</dbReference>
<dbReference type="PANTHER" id="PTHR43648">
    <property type="entry name" value="ELECTRON TRANSFER FLAVOPROTEIN BETA SUBUNIT LYSINE METHYLTRANSFERASE"/>
    <property type="match status" value="1"/>
</dbReference>
<dbReference type="PANTHER" id="PTHR43648:SF1">
    <property type="entry name" value="ELECTRON TRANSFER FLAVOPROTEIN BETA SUBUNIT LYSINE METHYLTRANSFERASE"/>
    <property type="match status" value="1"/>
</dbReference>
<dbReference type="Pfam" id="PF06325">
    <property type="entry name" value="PrmA"/>
    <property type="match status" value="1"/>
</dbReference>
<dbReference type="PIRSF" id="PIRSF000401">
    <property type="entry name" value="RPL11_MTase"/>
    <property type="match status" value="1"/>
</dbReference>
<dbReference type="SUPFAM" id="SSF53335">
    <property type="entry name" value="S-adenosyl-L-methionine-dependent methyltransferases"/>
    <property type="match status" value="1"/>
</dbReference>
<proteinExistence type="inferred from homology"/>
<accession>Q2S9L7</accession>
<keyword id="KW-0963">Cytoplasm</keyword>
<keyword id="KW-0489">Methyltransferase</keyword>
<keyword id="KW-1185">Reference proteome</keyword>
<keyword id="KW-0949">S-adenosyl-L-methionine</keyword>
<keyword id="KW-0808">Transferase</keyword>
<name>PRMA_HAHCH</name>